<name>DDX42_PONAB</name>
<comment type="function">
    <text evidence="1">ATP-dependent RNA helicase that binds to partially double-stranded RNAs (dsRNAs) in order to unwind RNA secondary structures. Unwinding is promoted in the presence of single-strand binding proteins. Also mediates RNA duplex formation thereby displacing the single-strand RNA binding protein. ATP and ADP modulate its activity: ATP binding and hydrolysis by DDX42 triggers RNA strand separation, whereas the ADP-bound form of the protein triggers annealing of complementary RNA strands. Required for assembly of the 17S U2 SnRNP complex of the spliceosome, a large ribonucleoprotein complex that removes introns from transcribed pre-mRNAs: DDX42 associates transiently with the SF3B subcomplex of the 17S U2 SnRNP complex and is released after fulfilling its role in the assembly of 17S U2 SnRNP. Involved in the survival of cells by interacting with TP53BP2 and thereby counteracting the apoptosis-stimulating activity of TP53BP2. Relocalizes TP53BP2 to the cytoplasm.</text>
</comment>
<comment type="catalytic activity">
    <reaction evidence="1">
        <text>ATP + H2O = ADP + phosphate + H(+)</text>
        <dbReference type="Rhea" id="RHEA:13065"/>
        <dbReference type="ChEBI" id="CHEBI:15377"/>
        <dbReference type="ChEBI" id="CHEBI:15378"/>
        <dbReference type="ChEBI" id="CHEBI:30616"/>
        <dbReference type="ChEBI" id="CHEBI:43474"/>
        <dbReference type="ChEBI" id="CHEBI:456216"/>
        <dbReference type="EC" id="3.6.4.13"/>
    </reaction>
</comment>
<comment type="subunit">
    <text evidence="1">Transient component of the SF3B subcomplex of the 17S U2 SnRNP complex. Interacts (via the C-terminus) with TP53BP2; the interaction is not inhibitied by TP53BP2 ubiquitination and is independent of p53/TP53.</text>
</comment>
<comment type="subcellular location">
    <subcellularLocation>
        <location evidence="1">Cytoplasm</location>
    </subcellularLocation>
    <subcellularLocation>
        <location evidence="1">Nucleus</location>
    </subcellularLocation>
</comment>
<comment type="similarity">
    <text evidence="6">Belongs to the DEAD box helicase family. DDX42 subfamily.</text>
</comment>
<sequence>MNWNKGGPGTKRGFGFGGFAISAGKKEEPKLPQQSHSAFGATSSSSGFGKSAPPQLPSFYKIGSKRANFDEENAYFEDEEEDSSNVDLPYIPAENSPTRQQFHSKPIDSDSDDDPLEAFMAEVEDQAARDMKRLEEKDKERKNVKGIRDDIEEEDDQETYFRYMAENPTAGVVQEEEEDNLEYDSDGNPIAPTKKIIDPLPPIDHSEIDYPPFEKNFYNEHEEITNLTPQQLIDLRHKLNLRVSGAAPPRPGSSFAHFGFDEQLMHQIRKSEYTQPTPIQCQGVPVALSGRDMIGIAKTGSGKTAAFIWPMLIHIMDQKELEPGDGPIAVIVCPTRELCQQIHAEGKRFGKAYNLRSVAVYGGGSMWEQAKALQEGAEIVVCTPGRLIDHVKKKATNLQRVSYLVFDEADRMFDMGFEYQVRSIASHVRPDRQTLLFSATFRKKIEKLARDILIDPIRVVQGDIGEANEDVTQIVEILHSGPSKWNWLTRRLVEFTSSGSVLLFVTKKANAEELANNLKQEGHNLGLLHGDMDQSERNKVISDFKKKDIPVLVATDVAARGLDIPSIKTVINYDVARDIDTHTHRIGRTGRAGEKGVAYTLLTPKDSNFAGDLVRNLEGANQHVSKELLDLAMQNAWFRKSRFKGGKGKKLNIGGGGLGYRERPGLGSENMDRGNNNVMSNYEAYKPSTGAMGDRLTAMKAAFQSQYKSHFVAASLSNQKAGSSAAGASGWTSAGSLNSVPTNSAQQGHNSPDSPITSATKGIPGFGNIGNISGAPVTYPSAGAQGVNNTASGNNSREGTGGSNGKRERYTENRGSSRHSHGETGNRHSDSPRHGDGGRHGDGYRHPESSSRHTDGHRHGENRHGGSAGRHGENRGANDGRNGESRKEACNRESKMEPKMEPKMEPKVDSNKMDKVDSKTDKTADGFAVPEPPKRKKSRWDS</sequence>
<protein>
    <recommendedName>
        <fullName>ATP-dependent RNA helicase DDX42</fullName>
        <ecNumber evidence="1">3.6.4.13</ecNumber>
    </recommendedName>
    <alternativeName>
        <fullName>DEAD box protein 42</fullName>
    </alternativeName>
</protein>
<evidence type="ECO:0000250" key="1">
    <source>
        <dbReference type="UniProtKB" id="Q86XP3"/>
    </source>
</evidence>
<evidence type="ECO:0000255" key="2"/>
<evidence type="ECO:0000255" key="3">
    <source>
        <dbReference type="PROSITE-ProRule" id="PRU00541"/>
    </source>
</evidence>
<evidence type="ECO:0000255" key="4">
    <source>
        <dbReference type="PROSITE-ProRule" id="PRU00542"/>
    </source>
</evidence>
<evidence type="ECO:0000256" key="5">
    <source>
        <dbReference type="SAM" id="MobiDB-lite"/>
    </source>
</evidence>
<evidence type="ECO:0000305" key="6"/>
<proteinExistence type="evidence at transcript level"/>
<organism>
    <name type="scientific">Pongo abelii</name>
    <name type="common">Sumatran orangutan</name>
    <name type="synonym">Pongo pygmaeus abelii</name>
    <dbReference type="NCBI Taxonomy" id="9601"/>
    <lineage>
        <taxon>Eukaryota</taxon>
        <taxon>Metazoa</taxon>
        <taxon>Chordata</taxon>
        <taxon>Craniata</taxon>
        <taxon>Vertebrata</taxon>
        <taxon>Euteleostomi</taxon>
        <taxon>Mammalia</taxon>
        <taxon>Eutheria</taxon>
        <taxon>Euarchontoglires</taxon>
        <taxon>Primates</taxon>
        <taxon>Haplorrhini</taxon>
        <taxon>Catarrhini</taxon>
        <taxon>Hominidae</taxon>
        <taxon>Pongo</taxon>
    </lineage>
</organism>
<feature type="chain" id="PRO_0000280060" description="ATP-dependent RNA helicase DDX42">
    <location>
        <begin position="1"/>
        <end position="942"/>
    </location>
</feature>
<feature type="domain" description="Helicase ATP-binding" evidence="3">
    <location>
        <begin position="284"/>
        <end position="459"/>
    </location>
</feature>
<feature type="domain" description="Helicase C-terminal" evidence="4">
    <location>
        <begin position="487"/>
        <end position="632"/>
    </location>
</feature>
<feature type="region of interest" description="Disordered" evidence="5">
    <location>
        <begin position="1"/>
        <end position="114"/>
    </location>
</feature>
<feature type="region of interest" description="Disordered" evidence="5">
    <location>
        <begin position="182"/>
        <end position="203"/>
    </location>
</feature>
<feature type="region of interest" description="Disordered" evidence="5">
    <location>
        <begin position="737"/>
        <end position="762"/>
    </location>
</feature>
<feature type="region of interest" description="Necessary for interaction with TP53BP2" evidence="1">
    <location>
        <begin position="738"/>
        <end position="833"/>
    </location>
</feature>
<feature type="region of interest" description="Disordered" evidence="5">
    <location>
        <begin position="783"/>
        <end position="942"/>
    </location>
</feature>
<feature type="coiled-coil region" evidence="2">
    <location>
        <begin position="116"/>
        <end position="157"/>
    </location>
</feature>
<feature type="short sequence motif" description="Q motif">
    <location>
        <begin position="253"/>
        <end position="281"/>
    </location>
</feature>
<feature type="short sequence motif" description="DEAD box">
    <location>
        <begin position="407"/>
        <end position="410"/>
    </location>
</feature>
<feature type="compositionally biased region" description="Gly residues" evidence="5">
    <location>
        <begin position="1"/>
        <end position="18"/>
    </location>
</feature>
<feature type="compositionally biased region" description="Low complexity" evidence="5">
    <location>
        <begin position="35"/>
        <end position="52"/>
    </location>
</feature>
<feature type="compositionally biased region" description="Acidic residues" evidence="5">
    <location>
        <begin position="70"/>
        <end position="84"/>
    </location>
</feature>
<feature type="compositionally biased region" description="Polar residues" evidence="5">
    <location>
        <begin position="737"/>
        <end position="760"/>
    </location>
</feature>
<feature type="compositionally biased region" description="Polar residues" evidence="5">
    <location>
        <begin position="786"/>
        <end position="798"/>
    </location>
</feature>
<feature type="compositionally biased region" description="Basic and acidic residues" evidence="5">
    <location>
        <begin position="820"/>
        <end position="924"/>
    </location>
</feature>
<feature type="binding site" evidence="3">
    <location>
        <begin position="297"/>
        <end position="304"/>
    </location>
    <ligand>
        <name>ATP</name>
        <dbReference type="ChEBI" id="CHEBI:30616"/>
    </ligand>
</feature>
<feature type="modified residue" description="N6-acetyllysine" evidence="1">
    <location>
        <position position="5"/>
    </location>
</feature>
<feature type="modified residue" description="Omega-N-methylarginine" evidence="1">
    <location>
        <position position="12"/>
    </location>
</feature>
<feature type="modified residue" description="Phosphoserine" evidence="1">
    <location>
        <position position="58"/>
    </location>
</feature>
<feature type="modified residue" description="Phosphoserine" evidence="1">
    <location>
        <position position="96"/>
    </location>
</feature>
<feature type="modified residue" description="Phosphoserine" evidence="1">
    <location>
        <position position="104"/>
    </location>
</feature>
<feature type="modified residue" description="Phosphoserine" evidence="1">
    <location>
        <position position="109"/>
    </location>
</feature>
<feature type="modified residue" description="Phosphoserine" evidence="1">
    <location>
        <position position="111"/>
    </location>
</feature>
<feature type="modified residue" description="Phosphoserine" evidence="1">
    <location>
        <position position="185"/>
    </location>
</feature>
<feature type="modified residue" description="Phosphoserine" evidence="1">
    <location>
        <position position="754"/>
    </location>
</feature>
<feature type="cross-link" description="Glycyl lysine isopeptide (Lys-Gly) (interchain with G-Cter in SUMO2)" evidence="1">
    <location>
        <position position="899"/>
    </location>
</feature>
<dbReference type="EC" id="3.6.4.13" evidence="1"/>
<dbReference type="EMBL" id="CR860187">
    <property type="protein sequence ID" value="CAH92329.1"/>
    <property type="molecule type" value="mRNA"/>
</dbReference>
<dbReference type="RefSeq" id="NP_001126368.1">
    <property type="nucleotide sequence ID" value="NM_001132896.1"/>
</dbReference>
<dbReference type="SMR" id="Q5R7D1"/>
<dbReference type="FunCoup" id="Q5R7D1">
    <property type="interactions" value="5589"/>
</dbReference>
<dbReference type="STRING" id="9601.ENSPPYP00000009583"/>
<dbReference type="GeneID" id="100173349"/>
<dbReference type="KEGG" id="pon:100173349"/>
<dbReference type="CTD" id="11325"/>
<dbReference type="eggNOG" id="KOG0339">
    <property type="taxonomic scope" value="Eukaryota"/>
</dbReference>
<dbReference type="InParanoid" id="Q5R7D1"/>
<dbReference type="OrthoDB" id="196131at2759"/>
<dbReference type="Proteomes" id="UP000001595">
    <property type="component" value="Unplaced"/>
</dbReference>
<dbReference type="GO" id="GO:0005737">
    <property type="term" value="C:cytoplasm"/>
    <property type="evidence" value="ECO:0000250"/>
    <property type="project" value="UniProtKB"/>
</dbReference>
<dbReference type="GO" id="GO:0005634">
    <property type="term" value="C:nucleus"/>
    <property type="evidence" value="ECO:0000250"/>
    <property type="project" value="UniProtKB"/>
</dbReference>
<dbReference type="GO" id="GO:0071004">
    <property type="term" value="C:U2-type prespliceosome"/>
    <property type="evidence" value="ECO:0000250"/>
    <property type="project" value="UniProtKB"/>
</dbReference>
<dbReference type="GO" id="GO:0005524">
    <property type="term" value="F:ATP binding"/>
    <property type="evidence" value="ECO:0007669"/>
    <property type="project" value="UniProtKB-KW"/>
</dbReference>
<dbReference type="GO" id="GO:0016887">
    <property type="term" value="F:ATP hydrolysis activity"/>
    <property type="evidence" value="ECO:0007669"/>
    <property type="project" value="RHEA"/>
</dbReference>
<dbReference type="GO" id="GO:0003723">
    <property type="term" value="F:RNA binding"/>
    <property type="evidence" value="ECO:0007669"/>
    <property type="project" value="UniProtKB-KW"/>
</dbReference>
<dbReference type="GO" id="GO:0003724">
    <property type="term" value="F:RNA helicase activity"/>
    <property type="evidence" value="ECO:0007669"/>
    <property type="project" value="UniProtKB-EC"/>
</dbReference>
<dbReference type="GO" id="GO:0008104">
    <property type="term" value="P:protein localization"/>
    <property type="evidence" value="ECO:0000250"/>
    <property type="project" value="UniProtKB"/>
</dbReference>
<dbReference type="GO" id="GO:0042981">
    <property type="term" value="P:regulation of apoptotic process"/>
    <property type="evidence" value="ECO:0000250"/>
    <property type="project" value="UniProtKB"/>
</dbReference>
<dbReference type="GO" id="GO:1903241">
    <property type="term" value="P:U2-type prespliceosome assembly"/>
    <property type="evidence" value="ECO:0000250"/>
    <property type="project" value="UniProtKB"/>
</dbReference>
<dbReference type="CDD" id="cd17952">
    <property type="entry name" value="DEADc_DDX42"/>
    <property type="match status" value="1"/>
</dbReference>
<dbReference type="CDD" id="cd18787">
    <property type="entry name" value="SF2_C_DEAD"/>
    <property type="match status" value="1"/>
</dbReference>
<dbReference type="FunFam" id="3.40.50.300:FF:000524">
    <property type="entry name" value="ATP-dependent RNA helicase DDX42"/>
    <property type="match status" value="1"/>
</dbReference>
<dbReference type="FunFam" id="3.40.50.300:FF:000079">
    <property type="entry name" value="probable ATP-dependent RNA helicase DDX17"/>
    <property type="match status" value="1"/>
</dbReference>
<dbReference type="Gene3D" id="3.40.50.300">
    <property type="entry name" value="P-loop containing nucleotide triphosphate hydrolases"/>
    <property type="match status" value="2"/>
</dbReference>
<dbReference type="InterPro" id="IPR011545">
    <property type="entry name" value="DEAD/DEAH_box_helicase_dom"/>
</dbReference>
<dbReference type="InterPro" id="IPR014001">
    <property type="entry name" value="Helicase_ATP-bd"/>
</dbReference>
<dbReference type="InterPro" id="IPR001650">
    <property type="entry name" value="Helicase_C-like"/>
</dbReference>
<dbReference type="InterPro" id="IPR027417">
    <property type="entry name" value="P-loop_NTPase"/>
</dbReference>
<dbReference type="InterPro" id="IPR000629">
    <property type="entry name" value="RNA-helicase_DEAD-box_CS"/>
</dbReference>
<dbReference type="InterPro" id="IPR014014">
    <property type="entry name" value="RNA_helicase_DEAD_Q_motif"/>
</dbReference>
<dbReference type="PANTHER" id="PTHR47958">
    <property type="entry name" value="ATP-DEPENDENT RNA HELICASE DBP3"/>
    <property type="match status" value="1"/>
</dbReference>
<dbReference type="Pfam" id="PF00270">
    <property type="entry name" value="DEAD"/>
    <property type="match status" value="1"/>
</dbReference>
<dbReference type="Pfam" id="PF00271">
    <property type="entry name" value="Helicase_C"/>
    <property type="match status" value="1"/>
</dbReference>
<dbReference type="SMART" id="SM00487">
    <property type="entry name" value="DEXDc"/>
    <property type="match status" value="1"/>
</dbReference>
<dbReference type="SMART" id="SM00490">
    <property type="entry name" value="HELICc"/>
    <property type="match status" value="1"/>
</dbReference>
<dbReference type="SUPFAM" id="SSF52540">
    <property type="entry name" value="P-loop containing nucleoside triphosphate hydrolases"/>
    <property type="match status" value="1"/>
</dbReference>
<dbReference type="PROSITE" id="PS00039">
    <property type="entry name" value="DEAD_ATP_HELICASE"/>
    <property type="match status" value="1"/>
</dbReference>
<dbReference type="PROSITE" id="PS51192">
    <property type="entry name" value="HELICASE_ATP_BIND_1"/>
    <property type="match status" value="1"/>
</dbReference>
<dbReference type="PROSITE" id="PS51194">
    <property type="entry name" value="HELICASE_CTER"/>
    <property type="match status" value="1"/>
</dbReference>
<dbReference type="PROSITE" id="PS51195">
    <property type="entry name" value="Q_MOTIF"/>
    <property type="match status" value="1"/>
</dbReference>
<accession>Q5R7D1</accession>
<keyword id="KW-0007">Acetylation</keyword>
<keyword id="KW-0067">ATP-binding</keyword>
<keyword id="KW-0175">Coiled coil</keyword>
<keyword id="KW-0963">Cytoplasm</keyword>
<keyword id="KW-0347">Helicase</keyword>
<keyword id="KW-0378">Hydrolase</keyword>
<keyword id="KW-1017">Isopeptide bond</keyword>
<keyword id="KW-0488">Methylation</keyword>
<keyword id="KW-0547">Nucleotide-binding</keyword>
<keyword id="KW-0539">Nucleus</keyword>
<keyword id="KW-0597">Phosphoprotein</keyword>
<keyword id="KW-1185">Reference proteome</keyword>
<keyword id="KW-0694">RNA-binding</keyword>
<keyword id="KW-0832">Ubl conjugation</keyword>
<gene>
    <name type="primary">DDX42</name>
</gene>
<reference key="1">
    <citation type="submission" date="2004-11" db="EMBL/GenBank/DDBJ databases">
        <authorList>
            <consortium name="The German cDNA consortium"/>
        </authorList>
    </citation>
    <scope>NUCLEOTIDE SEQUENCE [LARGE SCALE MRNA]</scope>
    <source>
        <tissue>Kidney</tissue>
    </source>
</reference>